<accession>C3LQX2</accession>
<gene>
    <name evidence="1" type="primary">yacG</name>
    <name type="ordered locus">VCM66_2352</name>
</gene>
<keyword id="KW-0479">Metal-binding</keyword>
<keyword id="KW-0862">Zinc</keyword>
<evidence type="ECO:0000255" key="1">
    <source>
        <dbReference type="HAMAP-Rule" id="MF_00649"/>
    </source>
</evidence>
<evidence type="ECO:0000256" key="2">
    <source>
        <dbReference type="SAM" id="MobiDB-lite"/>
    </source>
</evidence>
<comment type="function">
    <text evidence="1">Inhibits all the catalytic activities of DNA gyrase by preventing its interaction with DNA. Acts by binding directly to the C-terminal domain of GyrB, which probably disrupts DNA binding by the gyrase.</text>
</comment>
<comment type="cofactor">
    <cofactor evidence="1">
        <name>Zn(2+)</name>
        <dbReference type="ChEBI" id="CHEBI:29105"/>
    </cofactor>
    <text evidence="1">Binds 1 zinc ion.</text>
</comment>
<comment type="subunit">
    <text evidence="1">Interacts with GyrB.</text>
</comment>
<comment type="similarity">
    <text evidence="1">Belongs to the DNA gyrase inhibitor YacG family.</text>
</comment>
<feature type="chain" id="PRO_1000212403" description="DNA gyrase inhibitor YacG">
    <location>
        <begin position="1"/>
        <end position="65"/>
    </location>
</feature>
<feature type="region of interest" description="Disordered" evidence="2">
    <location>
        <begin position="45"/>
        <end position="65"/>
    </location>
</feature>
<feature type="compositionally biased region" description="Acidic residues" evidence="2">
    <location>
        <begin position="55"/>
        <end position="65"/>
    </location>
</feature>
<feature type="binding site" evidence="1">
    <location>
        <position position="10"/>
    </location>
    <ligand>
        <name>Zn(2+)</name>
        <dbReference type="ChEBI" id="CHEBI:29105"/>
    </ligand>
</feature>
<feature type="binding site" evidence="1">
    <location>
        <position position="13"/>
    </location>
    <ligand>
        <name>Zn(2+)</name>
        <dbReference type="ChEBI" id="CHEBI:29105"/>
    </ligand>
</feature>
<feature type="binding site" evidence="1">
    <location>
        <position position="29"/>
    </location>
    <ligand>
        <name>Zn(2+)</name>
        <dbReference type="ChEBI" id="CHEBI:29105"/>
    </ligand>
</feature>
<feature type="binding site" evidence="1">
    <location>
        <position position="33"/>
    </location>
    <ligand>
        <name>Zn(2+)</name>
        <dbReference type="ChEBI" id="CHEBI:29105"/>
    </ligand>
</feature>
<name>YACG_VIBCM</name>
<reference key="1">
    <citation type="journal article" date="2008" name="PLoS ONE">
        <title>A recalibrated molecular clock and independent origins for the cholera pandemic clones.</title>
        <authorList>
            <person name="Feng L."/>
            <person name="Reeves P.R."/>
            <person name="Lan R."/>
            <person name="Ren Y."/>
            <person name="Gao C."/>
            <person name="Zhou Z."/>
            <person name="Ren Y."/>
            <person name="Cheng J."/>
            <person name="Wang W."/>
            <person name="Wang J."/>
            <person name="Qian W."/>
            <person name="Li D."/>
            <person name="Wang L."/>
        </authorList>
    </citation>
    <scope>NUCLEOTIDE SEQUENCE [LARGE SCALE GENOMIC DNA]</scope>
    <source>
        <strain>M66-2</strain>
    </source>
</reference>
<dbReference type="EMBL" id="CP001233">
    <property type="protein sequence ID" value="ACP06650.1"/>
    <property type="molecule type" value="Genomic_DNA"/>
</dbReference>
<dbReference type="RefSeq" id="WP_000162868.1">
    <property type="nucleotide sequence ID" value="NC_012578.1"/>
</dbReference>
<dbReference type="SMR" id="C3LQX2"/>
<dbReference type="KEGG" id="vcm:VCM66_2352"/>
<dbReference type="HOGENOM" id="CLU_178280_3_1_6"/>
<dbReference type="Proteomes" id="UP000001217">
    <property type="component" value="Chromosome I"/>
</dbReference>
<dbReference type="GO" id="GO:0008657">
    <property type="term" value="F:DNA topoisomerase type II (double strand cut, ATP-hydrolyzing) inhibitor activity"/>
    <property type="evidence" value="ECO:0007669"/>
    <property type="project" value="UniProtKB-UniRule"/>
</dbReference>
<dbReference type="GO" id="GO:0008270">
    <property type="term" value="F:zinc ion binding"/>
    <property type="evidence" value="ECO:0007669"/>
    <property type="project" value="UniProtKB-UniRule"/>
</dbReference>
<dbReference type="GO" id="GO:0006355">
    <property type="term" value="P:regulation of DNA-templated transcription"/>
    <property type="evidence" value="ECO:0007669"/>
    <property type="project" value="InterPro"/>
</dbReference>
<dbReference type="Gene3D" id="3.30.50.10">
    <property type="entry name" value="Erythroid Transcription Factor GATA-1, subunit A"/>
    <property type="match status" value="1"/>
</dbReference>
<dbReference type="HAMAP" id="MF_00649">
    <property type="entry name" value="DNA_gyrase_inhibitor_YacG"/>
    <property type="match status" value="1"/>
</dbReference>
<dbReference type="InterPro" id="IPR005584">
    <property type="entry name" value="DNA_gyrase_inhibitor_YacG"/>
</dbReference>
<dbReference type="InterPro" id="IPR013088">
    <property type="entry name" value="Znf_NHR/GATA"/>
</dbReference>
<dbReference type="NCBIfam" id="NF001638">
    <property type="entry name" value="PRK00418.1"/>
    <property type="match status" value="1"/>
</dbReference>
<dbReference type="PANTHER" id="PTHR36150">
    <property type="entry name" value="DNA GYRASE INHIBITOR YACG"/>
    <property type="match status" value="1"/>
</dbReference>
<dbReference type="PANTHER" id="PTHR36150:SF1">
    <property type="entry name" value="DNA GYRASE INHIBITOR YACG"/>
    <property type="match status" value="1"/>
</dbReference>
<dbReference type="Pfam" id="PF03884">
    <property type="entry name" value="YacG"/>
    <property type="match status" value="1"/>
</dbReference>
<dbReference type="SUPFAM" id="SSF57716">
    <property type="entry name" value="Glucocorticoid receptor-like (DNA-binding domain)"/>
    <property type="match status" value="1"/>
</dbReference>
<protein>
    <recommendedName>
        <fullName evidence="1">DNA gyrase inhibitor YacG</fullName>
    </recommendedName>
</protein>
<sequence>MTKKLTIVKCPRCGTDVEWGEQSPHRPFCSKQCQMIDFGEWADEEKAIPGAPDMSDSDGWSEDQY</sequence>
<proteinExistence type="inferred from homology"/>
<organism>
    <name type="scientific">Vibrio cholerae serotype O1 (strain M66-2)</name>
    <dbReference type="NCBI Taxonomy" id="579112"/>
    <lineage>
        <taxon>Bacteria</taxon>
        <taxon>Pseudomonadati</taxon>
        <taxon>Pseudomonadota</taxon>
        <taxon>Gammaproteobacteria</taxon>
        <taxon>Vibrionales</taxon>
        <taxon>Vibrionaceae</taxon>
        <taxon>Vibrio</taxon>
    </lineage>
</organism>